<reference key="1">
    <citation type="submission" date="2006-08" db="EMBL/GenBank/DDBJ databases">
        <title>Complete sequence of Alkalilimnicola ehrilichei MLHE-1.</title>
        <authorList>
            <person name="Copeland A."/>
            <person name="Lucas S."/>
            <person name="Lapidus A."/>
            <person name="Barry K."/>
            <person name="Detter J.C."/>
            <person name="Glavina del Rio T."/>
            <person name="Hammon N."/>
            <person name="Israni S."/>
            <person name="Dalin E."/>
            <person name="Tice H."/>
            <person name="Pitluck S."/>
            <person name="Sims D."/>
            <person name="Brettin T."/>
            <person name="Bruce D."/>
            <person name="Han C."/>
            <person name="Tapia R."/>
            <person name="Gilna P."/>
            <person name="Schmutz J."/>
            <person name="Larimer F."/>
            <person name="Land M."/>
            <person name="Hauser L."/>
            <person name="Kyrpides N."/>
            <person name="Mikhailova N."/>
            <person name="Oremland R.S."/>
            <person name="Hoeft S.E."/>
            <person name="Switzer-Blum J."/>
            <person name="Kulp T."/>
            <person name="King G."/>
            <person name="Tabita R."/>
            <person name="Witte B."/>
            <person name="Santini J.M."/>
            <person name="Basu P."/>
            <person name="Hollibaugh J.T."/>
            <person name="Xie G."/>
            <person name="Stolz J.F."/>
            <person name="Richardson P."/>
        </authorList>
    </citation>
    <scope>NUCLEOTIDE SEQUENCE [LARGE SCALE GENOMIC DNA]</scope>
    <source>
        <strain>ATCC BAA-1101 / DSM 17681 / MLHE-1</strain>
    </source>
</reference>
<sequence length="106" mass="12240">MTDKAGDWQEHGPQVEEAPPQVKRPPLFKVIILNDDYTPMDFVVEVLQKFFHMDRARATQVMLHVHTRGEGVCGVFSRDVAETKVNQVNDWSRQHEHPLMCTLKEA</sequence>
<organism>
    <name type="scientific">Alkalilimnicola ehrlichii (strain ATCC BAA-1101 / DSM 17681 / MLHE-1)</name>
    <dbReference type="NCBI Taxonomy" id="187272"/>
    <lineage>
        <taxon>Bacteria</taxon>
        <taxon>Pseudomonadati</taxon>
        <taxon>Pseudomonadota</taxon>
        <taxon>Gammaproteobacteria</taxon>
        <taxon>Chromatiales</taxon>
        <taxon>Ectothiorhodospiraceae</taxon>
        <taxon>Alkalilimnicola</taxon>
    </lineage>
</organism>
<proteinExistence type="inferred from homology"/>
<dbReference type="EMBL" id="CP000453">
    <property type="protein sequence ID" value="ABI56797.1"/>
    <property type="molecule type" value="Genomic_DNA"/>
</dbReference>
<dbReference type="RefSeq" id="WP_011629192.1">
    <property type="nucleotide sequence ID" value="NC_008340.1"/>
</dbReference>
<dbReference type="SMR" id="Q0A8P0"/>
<dbReference type="KEGG" id="aeh:Mlg_1448"/>
<dbReference type="eggNOG" id="COG2127">
    <property type="taxonomic scope" value="Bacteria"/>
</dbReference>
<dbReference type="HOGENOM" id="CLU_134358_2_1_6"/>
<dbReference type="OrthoDB" id="9796121at2"/>
<dbReference type="Proteomes" id="UP000001962">
    <property type="component" value="Chromosome"/>
</dbReference>
<dbReference type="GO" id="GO:0030163">
    <property type="term" value="P:protein catabolic process"/>
    <property type="evidence" value="ECO:0007669"/>
    <property type="project" value="InterPro"/>
</dbReference>
<dbReference type="GO" id="GO:0006508">
    <property type="term" value="P:proteolysis"/>
    <property type="evidence" value="ECO:0007669"/>
    <property type="project" value="UniProtKB-UniRule"/>
</dbReference>
<dbReference type="FunFam" id="3.30.1390.10:FF:000002">
    <property type="entry name" value="ATP-dependent Clp protease adapter protein ClpS"/>
    <property type="match status" value="1"/>
</dbReference>
<dbReference type="Gene3D" id="3.30.1390.10">
    <property type="match status" value="1"/>
</dbReference>
<dbReference type="HAMAP" id="MF_00302">
    <property type="entry name" value="ClpS"/>
    <property type="match status" value="1"/>
</dbReference>
<dbReference type="InterPro" id="IPR022935">
    <property type="entry name" value="ClpS"/>
</dbReference>
<dbReference type="InterPro" id="IPR003769">
    <property type="entry name" value="ClpS_core"/>
</dbReference>
<dbReference type="InterPro" id="IPR014719">
    <property type="entry name" value="Ribosomal_bL12_C/ClpS-like"/>
</dbReference>
<dbReference type="NCBIfam" id="NF000669">
    <property type="entry name" value="PRK00033.1-2"/>
    <property type="match status" value="1"/>
</dbReference>
<dbReference type="NCBIfam" id="NF000672">
    <property type="entry name" value="PRK00033.1-5"/>
    <property type="match status" value="1"/>
</dbReference>
<dbReference type="PANTHER" id="PTHR33473:SF19">
    <property type="entry name" value="ATP-DEPENDENT CLP PROTEASE ADAPTER PROTEIN CLPS"/>
    <property type="match status" value="1"/>
</dbReference>
<dbReference type="PANTHER" id="PTHR33473">
    <property type="entry name" value="ATP-DEPENDENT CLP PROTEASE ADAPTER PROTEIN CLPS1, CHLOROPLASTIC"/>
    <property type="match status" value="1"/>
</dbReference>
<dbReference type="Pfam" id="PF02617">
    <property type="entry name" value="ClpS"/>
    <property type="match status" value="1"/>
</dbReference>
<dbReference type="SUPFAM" id="SSF54736">
    <property type="entry name" value="ClpS-like"/>
    <property type="match status" value="1"/>
</dbReference>
<name>CLPS_ALKEH</name>
<comment type="function">
    <text evidence="1">Involved in the modulation of the specificity of the ClpAP-mediated ATP-dependent protein degradation.</text>
</comment>
<comment type="subunit">
    <text evidence="1">Binds to the N-terminal domain of the chaperone ClpA.</text>
</comment>
<comment type="similarity">
    <text evidence="1">Belongs to the ClpS family.</text>
</comment>
<gene>
    <name evidence="1" type="primary">clpS</name>
    <name type="ordered locus">Mlg_1448</name>
</gene>
<evidence type="ECO:0000255" key="1">
    <source>
        <dbReference type="HAMAP-Rule" id="MF_00302"/>
    </source>
</evidence>
<evidence type="ECO:0000256" key="2">
    <source>
        <dbReference type="SAM" id="MobiDB-lite"/>
    </source>
</evidence>
<keyword id="KW-1185">Reference proteome</keyword>
<feature type="chain" id="PRO_0000300698" description="ATP-dependent Clp protease adapter protein ClpS">
    <location>
        <begin position="1"/>
        <end position="106"/>
    </location>
</feature>
<feature type="region of interest" description="Disordered" evidence="2">
    <location>
        <begin position="1"/>
        <end position="21"/>
    </location>
</feature>
<feature type="compositionally biased region" description="Basic and acidic residues" evidence="2">
    <location>
        <begin position="1"/>
        <end position="14"/>
    </location>
</feature>
<accession>Q0A8P0</accession>
<protein>
    <recommendedName>
        <fullName evidence="1">ATP-dependent Clp protease adapter protein ClpS</fullName>
    </recommendedName>
</protein>